<reference key="1">
    <citation type="journal article" date="1991" name="Gene">
        <title>Cloning and chromosomal mapping of nuclear genes encoding chloroplast and cytosolic glyceraldehyde-3-phosphate-dehydrogenase from Arabidopsis thaliana.</title>
        <authorList>
            <person name="Shih M.-C."/>
            <person name="Heinrich P."/>
            <person name="Goodman H.M."/>
        </authorList>
    </citation>
    <scope>NUCLEOTIDE SEQUENCE [GENOMIC DNA / MRNA]</scope>
</reference>
<reference key="2">
    <citation type="journal article" date="1992" name="Gene">
        <authorList>
            <person name="Shih M.-C."/>
            <person name="Heinrich P."/>
            <person name="Goodman H.M."/>
        </authorList>
    </citation>
    <scope>ERRATUM OF PUBMED:1916285</scope>
</reference>
<reference key="3">
    <citation type="journal article" date="1996" name="Nucleic Acids Res.">
        <title>Sequence analysis of an 81 kb contig from Arabidopsis thaliana chromosome III.</title>
        <authorList>
            <person name="Quigley F."/>
            <person name="Dao P."/>
            <person name="Cottet A."/>
            <person name="Mache R."/>
        </authorList>
    </citation>
    <scope>NUCLEOTIDE SEQUENCE [GENOMIC DNA / MRNA]</scope>
    <source>
        <strain>cv. Columbia</strain>
        <tissue>Shoot</tissue>
    </source>
</reference>
<reference key="4">
    <citation type="journal article" date="2000" name="DNA Res.">
        <title>Structural analysis of Arabidopsis thaliana chromosome 3. I. Sequence features of the regions of 4,504,864 bp covered by sixty P1 and TAC clones.</title>
        <authorList>
            <person name="Sato S."/>
            <person name="Nakamura Y."/>
            <person name="Kaneko T."/>
            <person name="Katoh T."/>
            <person name="Asamizu E."/>
            <person name="Tabata S."/>
        </authorList>
    </citation>
    <scope>NUCLEOTIDE SEQUENCE [LARGE SCALE GENOMIC DNA]</scope>
    <source>
        <strain>cv. Columbia</strain>
    </source>
</reference>
<reference key="5">
    <citation type="journal article" date="2017" name="Plant J.">
        <title>Araport11: a complete reannotation of the Arabidopsis thaliana reference genome.</title>
        <authorList>
            <person name="Cheng C.Y."/>
            <person name="Krishnakumar V."/>
            <person name="Chan A.P."/>
            <person name="Thibaud-Nissen F."/>
            <person name="Schobel S."/>
            <person name="Town C.D."/>
        </authorList>
    </citation>
    <scope>GENOME REANNOTATION</scope>
    <source>
        <strain>cv. Columbia</strain>
    </source>
</reference>
<reference key="6">
    <citation type="journal article" date="2003" name="Science">
        <title>Empirical analysis of transcriptional activity in the Arabidopsis genome.</title>
        <authorList>
            <person name="Yamada K."/>
            <person name="Lim J."/>
            <person name="Dale J.M."/>
            <person name="Chen H."/>
            <person name="Shinn P."/>
            <person name="Palm C.J."/>
            <person name="Southwick A.M."/>
            <person name="Wu H.C."/>
            <person name="Kim C.J."/>
            <person name="Nguyen M."/>
            <person name="Pham P.K."/>
            <person name="Cheuk R.F."/>
            <person name="Karlin-Newmann G."/>
            <person name="Liu S.X."/>
            <person name="Lam B."/>
            <person name="Sakano H."/>
            <person name="Wu T."/>
            <person name="Yu G."/>
            <person name="Miranda M."/>
            <person name="Quach H.L."/>
            <person name="Tripp M."/>
            <person name="Chang C.H."/>
            <person name="Lee J.M."/>
            <person name="Toriumi M.J."/>
            <person name="Chan M.M."/>
            <person name="Tang C.C."/>
            <person name="Onodera C.S."/>
            <person name="Deng J.M."/>
            <person name="Akiyama K."/>
            <person name="Ansari Y."/>
            <person name="Arakawa T."/>
            <person name="Banh J."/>
            <person name="Banno F."/>
            <person name="Bowser L."/>
            <person name="Brooks S.Y."/>
            <person name="Carninci P."/>
            <person name="Chao Q."/>
            <person name="Choy N."/>
            <person name="Enju A."/>
            <person name="Goldsmith A.D."/>
            <person name="Gurjal M."/>
            <person name="Hansen N.F."/>
            <person name="Hayashizaki Y."/>
            <person name="Johnson-Hopson C."/>
            <person name="Hsuan V.W."/>
            <person name="Iida K."/>
            <person name="Karnes M."/>
            <person name="Khan S."/>
            <person name="Koesema E."/>
            <person name="Ishida J."/>
            <person name="Jiang P.X."/>
            <person name="Jones T."/>
            <person name="Kawai J."/>
            <person name="Kamiya A."/>
            <person name="Meyers C."/>
            <person name="Nakajima M."/>
            <person name="Narusaka M."/>
            <person name="Seki M."/>
            <person name="Sakurai T."/>
            <person name="Satou M."/>
            <person name="Tamse R."/>
            <person name="Vaysberg M."/>
            <person name="Wallender E.K."/>
            <person name="Wong C."/>
            <person name="Yamamura Y."/>
            <person name="Yuan S."/>
            <person name="Shinozaki K."/>
            <person name="Davis R.W."/>
            <person name="Theologis A."/>
            <person name="Ecker J.R."/>
        </authorList>
    </citation>
    <scope>NUCLEOTIDE SEQUENCE [LARGE SCALE MRNA]</scope>
    <source>
        <strain>cv. Columbia</strain>
    </source>
</reference>
<reference key="7">
    <citation type="journal article" date="2003" name="Mol. Cell. Proteomics">
        <title>Proteomics of the chloroplast envelope membranes from Arabidopsis thaliana.</title>
        <authorList>
            <person name="Ferro M."/>
            <person name="Salvi D."/>
            <person name="Brugiere S."/>
            <person name="Miras S."/>
            <person name="Kowalski S."/>
            <person name="Louwagie M."/>
            <person name="Garin J."/>
            <person name="Joyard J."/>
            <person name="Rolland N."/>
        </authorList>
    </citation>
    <scope>IDENTIFICATION BY MASS SPECTROMETRY</scope>
    <scope>SUBCELLULAR LOCATION [LARGE SCALE ANALYSIS]</scope>
    <source>
        <strain>cv. Wassilewskija</strain>
    </source>
</reference>
<reference key="8">
    <citation type="journal article" date="2005" name="J. Exp. Bot.">
        <title>Co-ordinated gene expression of photosynthetic glyceraldehyde-3-phosphate dehydrogenase, phosphoribulokinase, and CP12 in Arabidopsis thaliana.</title>
        <authorList>
            <person name="Marri L."/>
            <person name="Sparla F."/>
            <person name="Pupillo P."/>
            <person name="Trost P."/>
        </authorList>
    </citation>
    <scope>TISSUE SPECIFICITY</scope>
    <scope>INDUCTION</scope>
</reference>
<reference key="9">
    <citation type="journal article" date="2009" name="Plant Physiol.">
        <title>Plastidial glyceraldehyde-3-phosphate dehydrogenase deficiency leads to altered root development and affects the sugar and amino acid balance in Arabidopsis.</title>
        <authorList>
            <person name="Munoz-Bertomeu J."/>
            <person name="Cascales-Minana B."/>
            <person name="Mulet J.M."/>
            <person name="Baroja-Fernandez E."/>
            <person name="Pozueta-Romero J."/>
            <person name="Kuhn J.M."/>
            <person name="Segura J."/>
            <person name="Ros R."/>
        </authorList>
    </citation>
    <scope>SUBCELLULAR LOCATION</scope>
</reference>
<reference key="10">
    <citation type="journal article" date="2010" name="Acta Crystallogr. F">
        <title>Structure of photosynthetic glyceraldehyde-3-phosphate dehydrogenase (isoform A4) from Arabidopsis thaliana in complex with NAD.</title>
        <authorList>
            <person name="Fermani S."/>
            <person name="Sparla F."/>
            <person name="Marri L."/>
            <person name="Thumiger A."/>
            <person name="Pupillo P."/>
            <person name="Falini G."/>
            <person name="Trost P."/>
        </authorList>
    </citation>
    <scope>X-RAY CRYSTALLOGRAPHY (2.60 ANGSTROMS) OF 60-396 IN COMPLEX WITH NAD</scope>
    <scope>SUBUNIT</scope>
</reference>
<reference key="11">
    <citation type="journal article" date="2012" name="J. Biol. Chem.">
        <title>Conformational selection and folding-upon-binding of intrinsically disordered protein CP12 regulate photosynthetic enzymes assembly.</title>
        <authorList>
            <person name="Fermani S."/>
            <person name="Trivelli X."/>
            <person name="Sparla F."/>
            <person name="Thumiger A."/>
            <person name="Calvaresi M."/>
            <person name="Marri L."/>
            <person name="Falini G."/>
            <person name="Zerbetto F."/>
            <person name="Trost P."/>
        </authorList>
    </citation>
    <scope>X-RAY CRYSTALLOGRAPHY (2.00 ANGSTROMS) OF 60-396 IN COMPLEX WITH NAD</scope>
    <scope>SUBUNIT</scope>
</reference>
<proteinExistence type="evidence at protein level"/>
<accession>P25856</accession>
<accession>Q41184</accession>
<accession>Q9LSE6</accession>
<gene>
    <name type="primary">GAPA1</name>
    <name type="synonym">GAPA</name>
    <name type="ordered locus">At3g26650</name>
    <name type="ORF">MLJ15.4</name>
    <name type="ORF">MLJ15_5</name>
</gene>
<protein>
    <recommendedName>
        <fullName>Glyceraldehyde-3-phosphate dehydrogenase GAPA1, chloroplastic</fullName>
        <ecNumber>1.2.1.13</ecNumber>
    </recommendedName>
    <alternativeName>
        <fullName>NADP-dependent glyceraldehydephosphate dehydrogenase A subunit 1</fullName>
    </alternativeName>
</protein>
<dbReference type="EC" id="1.2.1.13"/>
<dbReference type="EMBL" id="M64114">
    <property type="protein sequence ID" value="AAD10209.1"/>
    <property type="status" value="ALT_INIT"/>
    <property type="molecule type" value="mRNA"/>
</dbReference>
<dbReference type="EMBL" id="M64117">
    <property type="protein sequence ID" value="AAA32793.1"/>
    <property type="molecule type" value="Genomic_DNA"/>
</dbReference>
<dbReference type="EMBL" id="S45910">
    <property type="protein sequence ID" value="AAB23532.1"/>
    <property type="molecule type" value="Genomic_DNA"/>
</dbReference>
<dbReference type="EMBL" id="X98130">
    <property type="protein sequence ID" value="CAA66816.1"/>
    <property type="molecule type" value="Genomic_DNA"/>
</dbReference>
<dbReference type="EMBL" id="AB026648">
    <property type="protein sequence ID" value="BAB01730.1"/>
    <property type="molecule type" value="Genomic_DNA"/>
</dbReference>
<dbReference type="EMBL" id="CP002686">
    <property type="protein sequence ID" value="AEE77191.1"/>
    <property type="molecule type" value="Genomic_DNA"/>
</dbReference>
<dbReference type="EMBL" id="AY058140">
    <property type="protein sequence ID" value="AAL25556.1"/>
    <property type="molecule type" value="mRNA"/>
</dbReference>
<dbReference type="EMBL" id="AY058107">
    <property type="protein sequence ID" value="AAL24215.1"/>
    <property type="molecule type" value="mRNA"/>
</dbReference>
<dbReference type="EMBL" id="AF428431">
    <property type="protein sequence ID" value="AAL16200.1"/>
    <property type="molecule type" value="mRNA"/>
</dbReference>
<dbReference type="EMBL" id="AY075637">
    <property type="protein sequence ID" value="AAL91645.1"/>
    <property type="molecule type" value="mRNA"/>
</dbReference>
<dbReference type="EMBL" id="AY142053">
    <property type="protein sequence ID" value="AAM98317.1"/>
    <property type="molecule type" value="mRNA"/>
</dbReference>
<dbReference type="PIR" id="JQ1285">
    <property type="entry name" value="JQ1285"/>
</dbReference>
<dbReference type="RefSeq" id="NP_566796.2">
    <property type="nucleotide sequence ID" value="NM_113576.4"/>
</dbReference>
<dbReference type="PDB" id="3K2B">
    <property type="method" value="X-ray"/>
    <property type="resolution" value="2.60 A"/>
    <property type="chains" value="A/B/C/D/E/F/G/H/O/Q=60-396"/>
</dbReference>
<dbReference type="PDB" id="3QV1">
    <property type="method" value="X-ray"/>
    <property type="resolution" value="2.00 A"/>
    <property type="chains" value="A/B/C/D/E/F=60-396"/>
</dbReference>
<dbReference type="PDB" id="3RVD">
    <property type="method" value="X-ray"/>
    <property type="resolution" value="2.70 A"/>
    <property type="chains" value="A/B/C/D/E/F/G/H/O/Q=61-396"/>
</dbReference>
<dbReference type="PDB" id="6KEZ">
    <property type="method" value="X-ray"/>
    <property type="resolution" value="3.50 A"/>
    <property type="chains" value="A/B/C/D/E/F/G/H=61-396"/>
</dbReference>
<dbReference type="PDBsum" id="3K2B"/>
<dbReference type="PDBsum" id="3QV1"/>
<dbReference type="PDBsum" id="3RVD"/>
<dbReference type="PDBsum" id="6KEZ"/>
<dbReference type="SMR" id="P25856"/>
<dbReference type="BioGRID" id="7607">
    <property type="interactions" value="9"/>
</dbReference>
<dbReference type="FunCoup" id="P25856">
    <property type="interactions" value="1157"/>
</dbReference>
<dbReference type="IntAct" id="P25856">
    <property type="interactions" value="2"/>
</dbReference>
<dbReference type="MINT" id="P25856"/>
<dbReference type="STRING" id="3702.P25856"/>
<dbReference type="iPTMnet" id="P25856"/>
<dbReference type="PaxDb" id="3702-AT3G26650.1"/>
<dbReference type="ProteomicsDB" id="228893"/>
<dbReference type="EnsemblPlants" id="AT3G26650.1">
    <property type="protein sequence ID" value="AT3G26650.1"/>
    <property type="gene ID" value="AT3G26650"/>
</dbReference>
<dbReference type="GeneID" id="822277"/>
<dbReference type="Gramene" id="AT3G26650.1">
    <property type="protein sequence ID" value="AT3G26650.1"/>
    <property type="gene ID" value="AT3G26650"/>
</dbReference>
<dbReference type="KEGG" id="ath:AT3G26650"/>
<dbReference type="Araport" id="AT3G26650"/>
<dbReference type="TAIR" id="AT3G26650">
    <property type="gene designation" value="GAPA"/>
</dbReference>
<dbReference type="eggNOG" id="KOG0657">
    <property type="taxonomic scope" value="Eukaryota"/>
</dbReference>
<dbReference type="HOGENOM" id="CLU_030140_0_2_1"/>
<dbReference type="InParanoid" id="P25856"/>
<dbReference type="OMA" id="WKDMEVD"/>
<dbReference type="OrthoDB" id="1152826at2759"/>
<dbReference type="PhylomeDB" id="P25856"/>
<dbReference type="BioCyc" id="ARA:AT3G26650-MONOMER"/>
<dbReference type="BioCyc" id="MetaCyc:AT3G26650-MONOMER"/>
<dbReference type="BRENDA" id="1.2.1.13">
    <property type="organism ID" value="399"/>
</dbReference>
<dbReference type="UniPathway" id="UPA00116"/>
<dbReference type="CD-CODE" id="4299E36E">
    <property type="entry name" value="Nucleolus"/>
</dbReference>
<dbReference type="EvolutionaryTrace" id="P25856"/>
<dbReference type="PRO" id="PR:P25856"/>
<dbReference type="Proteomes" id="UP000006548">
    <property type="component" value="Chromosome 3"/>
</dbReference>
<dbReference type="ExpressionAtlas" id="P25856">
    <property type="expression patterns" value="baseline and differential"/>
</dbReference>
<dbReference type="GO" id="GO:0048046">
    <property type="term" value="C:apoplast"/>
    <property type="evidence" value="ECO:0007005"/>
    <property type="project" value="TAIR"/>
</dbReference>
<dbReference type="GO" id="GO:0009507">
    <property type="term" value="C:chloroplast"/>
    <property type="evidence" value="ECO:0007005"/>
    <property type="project" value="TAIR"/>
</dbReference>
<dbReference type="GO" id="GO:0009941">
    <property type="term" value="C:chloroplast envelope"/>
    <property type="evidence" value="ECO:0007005"/>
    <property type="project" value="TAIR"/>
</dbReference>
<dbReference type="GO" id="GO:0031969">
    <property type="term" value="C:chloroplast membrane"/>
    <property type="evidence" value="ECO:0007669"/>
    <property type="project" value="UniProtKB-SubCell"/>
</dbReference>
<dbReference type="GO" id="GO:0009570">
    <property type="term" value="C:chloroplast stroma"/>
    <property type="evidence" value="ECO:0007005"/>
    <property type="project" value="TAIR"/>
</dbReference>
<dbReference type="GO" id="GO:0009535">
    <property type="term" value="C:chloroplast thylakoid membrane"/>
    <property type="evidence" value="ECO:0007005"/>
    <property type="project" value="TAIR"/>
</dbReference>
<dbReference type="GO" id="GO:0005829">
    <property type="term" value="C:cytosol"/>
    <property type="evidence" value="ECO:0007005"/>
    <property type="project" value="TAIR"/>
</dbReference>
<dbReference type="GO" id="GO:0010319">
    <property type="term" value="C:stromule"/>
    <property type="evidence" value="ECO:0000314"/>
    <property type="project" value="TAIR"/>
</dbReference>
<dbReference type="GO" id="GO:0099080">
    <property type="term" value="C:supramolecular complex"/>
    <property type="evidence" value="ECO:0000314"/>
    <property type="project" value="CAFA"/>
</dbReference>
<dbReference type="GO" id="GO:0097718">
    <property type="term" value="F:disordered domain specific binding"/>
    <property type="evidence" value="ECO:0000353"/>
    <property type="project" value="CAFA"/>
</dbReference>
<dbReference type="GO" id="GO:0004365">
    <property type="term" value="F:glyceraldehyde-3-phosphate dehydrogenase (NAD+) (phosphorylating) activity"/>
    <property type="evidence" value="ECO:0000314"/>
    <property type="project" value="CAFA"/>
</dbReference>
<dbReference type="GO" id="GO:0047100">
    <property type="term" value="F:glyceraldehyde-3-phosphate dehydrogenase (NADP+) (phosphorylating) activity"/>
    <property type="evidence" value="ECO:0007669"/>
    <property type="project" value="UniProtKB-EC"/>
</dbReference>
<dbReference type="GO" id="GO:0042802">
    <property type="term" value="F:identical protein binding"/>
    <property type="evidence" value="ECO:0000314"/>
    <property type="project" value="CAFA"/>
</dbReference>
<dbReference type="GO" id="GO:0003729">
    <property type="term" value="F:mRNA binding"/>
    <property type="evidence" value="ECO:0000314"/>
    <property type="project" value="TAIR"/>
</dbReference>
<dbReference type="GO" id="GO:0051287">
    <property type="term" value="F:NAD binding"/>
    <property type="evidence" value="ECO:0000314"/>
    <property type="project" value="CAFA"/>
</dbReference>
<dbReference type="GO" id="GO:0050661">
    <property type="term" value="F:NADP binding"/>
    <property type="evidence" value="ECO:0000314"/>
    <property type="project" value="CAFA"/>
</dbReference>
<dbReference type="GO" id="GO:0042803">
    <property type="term" value="F:protein homodimerization activity"/>
    <property type="evidence" value="ECO:0000314"/>
    <property type="project" value="CAFA"/>
</dbReference>
<dbReference type="GO" id="GO:1901149">
    <property type="term" value="F:salicylic acid binding"/>
    <property type="evidence" value="ECO:0007005"/>
    <property type="project" value="TAIR"/>
</dbReference>
<dbReference type="GO" id="GO:0006006">
    <property type="term" value="P:glucose metabolic process"/>
    <property type="evidence" value="ECO:0007669"/>
    <property type="project" value="InterPro"/>
</dbReference>
<dbReference type="GO" id="GO:0051289">
    <property type="term" value="P:protein homotetramerization"/>
    <property type="evidence" value="ECO:0000314"/>
    <property type="project" value="CAFA"/>
</dbReference>
<dbReference type="GO" id="GO:0019253">
    <property type="term" value="P:reductive pentose-phosphate cycle"/>
    <property type="evidence" value="ECO:0000303"/>
    <property type="project" value="TAIR"/>
</dbReference>
<dbReference type="GO" id="GO:0009409">
    <property type="term" value="P:response to cold"/>
    <property type="evidence" value="ECO:0000270"/>
    <property type="project" value="TAIR"/>
</dbReference>
<dbReference type="GO" id="GO:0009416">
    <property type="term" value="P:response to light stimulus"/>
    <property type="evidence" value="ECO:0000270"/>
    <property type="project" value="TAIR"/>
</dbReference>
<dbReference type="GO" id="GO:0009744">
    <property type="term" value="P:response to sucrose"/>
    <property type="evidence" value="ECO:0000270"/>
    <property type="project" value="TAIR"/>
</dbReference>
<dbReference type="CDD" id="cd18126">
    <property type="entry name" value="GAPDH_I_C"/>
    <property type="match status" value="1"/>
</dbReference>
<dbReference type="CDD" id="cd05214">
    <property type="entry name" value="GAPDH_I_N"/>
    <property type="match status" value="1"/>
</dbReference>
<dbReference type="FunFam" id="3.30.360.10:FF:000002">
    <property type="entry name" value="Glyceraldehyde-3-phosphate dehydrogenase"/>
    <property type="match status" value="1"/>
</dbReference>
<dbReference type="FunFam" id="3.40.50.720:FF:000001">
    <property type="entry name" value="Glyceraldehyde-3-phosphate dehydrogenase"/>
    <property type="match status" value="1"/>
</dbReference>
<dbReference type="Gene3D" id="3.30.360.10">
    <property type="entry name" value="Dihydrodipicolinate Reductase, domain 2"/>
    <property type="match status" value="1"/>
</dbReference>
<dbReference type="Gene3D" id="3.40.50.720">
    <property type="entry name" value="NAD(P)-binding Rossmann-like Domain"/>
    <property type="match status" value="1"/>
</dbReference>
<dbReference type="InterPro" id="IPR020831">
    <property type="entry name" value="GlycerAld/Erythrose_P_DH"/>
</dbReference>
<dbReference type="InterPro" id="IPR020830">
    <property type="entry name" value="GlycerAld_3-P_DH_AS"/>
</dbReference>
<dbReference type="InterPro" id="IPR020829">
    <property type="entry name" value="GlycerAld_3-P_DH_cat"/>
</dbReference>
<dbReference type="InterPro" id="IPR020828">
    <property type="entry name" value="GlycerAld_3-P_DH_NAD(P)-bd"/>
</dbReference>
<dbReference type="InterPro" id="IPR006424">
    <property type="entry name" value="Glyceraldehyde-3-P_DH_1"/>
</dbReference>
<dbReference type="InterPro" id="IPR036291">
    <property type="entry name" value="NAD(P)-bd_dom_sf"/>
</dbReference>
<dbReference type="NCBIfam" id="TIGR01534">
    <property type="entry name" value="GAPDH-I"/>
    <property type="match status" value="1"/>
</dbReference>
<dbReference type="PANTHER" id="PTHR43148">
    <property type="entry name" value="GLYCERALDEHYDE-3-PHOSPHATE DEHYDROGENASE 2"/>
    <property type="match status" value="1"/>
</dbReference>
<dbReference type="Pfam" id="PF02800">
    <property type="entry name" value="Gp_dh_C"/>
    <property type="match status" value="1"/>
</dbReference>
<dbReference type="Pfam" id="PF00044">
    <property type="entry name" value="Gp_dh_N"/>
    <property type="match status" value="1"/>
</dbReference>
<dbReference type="PIRSF" id="PIRSF000149">
    <property type="entry name" value="GAP_DH"/>
    <property type="match status" value="1"/>
</dbReference>
<dbReference type="PRINTS" id="PR00078">
    <property type="entry name" value="G3PDHDRGNASE"/>
</dbReference>
<dbReference type="SMART" id="SM00846">
    <property type="entry name" value="Gp_dh_N"/>
    <property type="match status" value="1"/>
</dbReference>
<dbReference type="SUPFAM" id="SSF55347">
    <property type="entry name" value="Glyceraldehyde-3-phosphate dehydrogenase-like, C-terminal domain"/>
    <property type="match status" value="1"/>
</dbReference>
<dbReference type="SUPFAM" id="SSF51735">
    <property type="entry name" value="NAD(P)-binding Rossmann-fold domains"/>
    <property type="match status" value="1"/>
</dbReference>
<dbReference type="PROSITE" id="PS00071">
    <property type="entry name" value="GAPDH"/>
    <property type="match status" value="1"/>
</dbReference>
<feature type="transit peptide" description="Chloroplast" evidence="1">
    <location>
        <begin position="1"/>
        <end position="60"/>
    </location>
</feature>
<feature type="chain" id="PRO_0000010416" description="Glyceraldehyde-3-phosphate dehydrogenase GAPA1, chloroplastic">
    <location>
        <begin position="61"/>
        <end position="396"/>
    </location>
</feature>
<feature type="active site" description="Nucleophile" evidence="2">
    <location>
        <position position="213"/>
    </location>
</feature>
<feature type="binding site" evidence="4 5">
    <location>
        <begin position="71"/>
        <end position="72"/>
    </location>
    <ligand>
        <name>NADP(+)</name>
        <dbReference type="ChEBI" id="CHEBI:58349"/>
    </ligand>
</feature>
<feature type="binding site" evidence="4 5">
    <location>
        <position position="95"/>
    </location>
    <ligand>
        <name>NADP(+)</name>
        <dbReference type="ChEBI" id="CHEBI:58349"/>
    </ligand>
</feature>
<feature type="binding site" evidence="4 5">
    <location>
        <position position="140"/>
    </location>
    <ligand>
        <name>NADP(+)</name>
        <dbReference type="ChEBI" id="CHEBI:58349"/>
    </ligand>
</feature>
<feature type="binding site" evidence="1">
    <location>
        <begin position="212"/>
        <end position="214"/>
    </location>
    <ligand>
        <name>D-glyceraldehyde 3-phosphate</name>
        <dbReference type="ChEBI" id="CHEBI:59776"/>
    </ligand>
</feature>
<feature type="binding site" evidence="1">
    <location>
        <position position="243"/>
    </location>
    <ligand>
        <name>D-glyceraldehyde 3-phosphate</name>
        <dbReference type="ChEBI" id="CHEBI:59776"/>
    </ligand>
</feature>
<feature type="binding site" evidence="1">
    <location>
        <position position="258"/>
    </location>
    <ligand>
        <name>D-glyceraldehyde 3-phosphate</name>
        <dbReference type="ChEBI" id="CHEBI:59776"/>
    </ligand>
</feature>
<feature type="binding site" evidence="1">
    <location>
        <begin position="271"/>
        <end position="272"/>
    </location>
    <ligand>
        <name>D-glyceraldehyde 3-phosphate</name>
        <dbReference type="ChEBI" id="CHEBI:59776"/>
    </ligand>
</feature>
<feature type="binding site" evidence="1">
    <location>
        <position position="294"/>
    </location>
    <ligand>
        <name>D-glyceraldehyde 3-phosphate</name>
        <dbReference type="ChEBI" id="CHEBI:59776"/>
    </ligand>
</feature>
<feature type="binding site" evidence="4 5">
    <location>
        <position position="376"/>
    </location>
    <ligand>
        <name>NADP(+)</name>
        <dbReference type="ChEBI" id="CHEBI:58349"/>
    </ligand>
</feature>
<feature type="site" description="Activates thiol group during catalysis" evidence="1">
    <location>
        <position position="240"/>
    </location>
</feature>
<feature type="sequence conflict" description="In Ref. 1; AAA32793/AAD10209 and 3; CAA66816." evidence="6" ref="1 3">
    <original>I</original>
    <variation>M</variation>
    <location>
        <position position="172"/>
    </location>
</feature>
<feature type="strand" evidence="7">
    <location>
        <begin position="62"/>
        <end position="68"/>
    </location>
</feature>
<feature type="helix" evidence="7">
    <location>
        <begin position="71"/>
        <end position="81"/>
    </location>
</feature>
<feature type="strand" evidence="7">
    <location>
        <begin position="87"/>
        <end position="94"/>
    </location>
</feature>
<feature type="helix" evidence="7">
    <location>
        <begin position="99"/>
        <end position="107"/>
    </location>
</feature>
<feature type="turn" evidence="7">
    <location>
        <begin position="110"/>
        <end position="112"/>
    </location>
</feature>
<feature type="strand" evidence="7">
    <location>
        <begin position="119"/>
        <end position="129"/>
    </location>
</feature>
<feature type="strand" evidence="7">
    <location>
        <begin position="132"/>
        <end position="137"/>
    </location>
</feature>
<feature type="helix" evidence="7">
    <location>
        <begin position="142"/>
        <end position="144"/>
    </location>
</feature>
<feature type="helix" evidence="7">
    <location>
        <begin position="147"/>
        <end position="150"/>
    </location>
</feature>
<feature type="strand" evidence="7">
    <location>
        <begin position="154"/>
        <end position="157"/>
    </location>
</feature>
<feature type="strand" evidence="7">
    <location>
        <begin position="159"/>
        <end position="161"/>
    </location>
</feature>
<feature type="helix" evidence="7">
    <location>
        <begin position="165"/>
        <end position="173"/>
    </location>
</feature>
<feature type="strand" evidence="7">
    <location>
        <begin position="177"/>
        <end position="183"/>
    </location>
</feature>
<feature type="strand" evidence="7">
    <location>
        <begin position="186"/>
        <end position="188"/>
    </location>
</feature>
<feature type="turn" evidence="7">
    <location>
        <begin position="194"/>
        <end position="196"/>
    </location>
</feature>
<feature type="helix" evidence="7">
    <location>
        <begin position="198"/>
        <end position="200"/>
    </location>
</feature>
<feature type="strand" evidence="7">
    <location>
        <begin position="206"/>
        <end position="209"/>
    </location>
</feature>
<feature type="helix" evidence="7">
    <location>
        <begin position="213"/>
        <end position="229"/>
    </location>
</feature>
<feature type="strand" evidence="7">
    <location>
        <begin position="231"/>
        <end position="241"/>
    </location>
</feature>
<feature type="strand" evidence="7">
    <location>
        <begin position="248"/>
        <end position="250"/>
    </location>
</feature>
<feature type="turn" evidence="7">
    <location>
        <begin position="256"/>
        <end position="259"/>
    </location>
</feature>
<feature type="helix" evidence="7">
    <location>
        <begin position="262"/>
        <end position="264"/>
    </location>
</feature>
<feature type="strand" evidence="7">
    <location>
        <begin position="267"/>
        <end position="269"/>
    </location>
</feature>
<feature type="helix" evidence="7">
    <location>
        <begin position="273"/>
        <end position="280"/>
    </location>
</feature>
<feature type="helix" evidence="7">
    <location>
        <begin position="282"/>
        <end position="284"/>
    </location>
</feature>
<feature type="turn" evidence="7">
    <location>
        <begin position="285"/>
        <end position="287"/>
    </location>
</feature>
<feature type="strand" evidence="7">
    <location>
        <begin position="288"/>
        <end position="296"/>
    </location>
</feature>
<feature type="strand" evidence="7">
    <location>
        <begin position="301"/>
        <end position="311"/>
    </location>
</feature>
<feature type="helix" evidence="7">
    <location>
        <begin position="315"/>
        <end position="327"/>
    </location>
</feature>
<feature type="turn" evidence="7">
    <location>
        <begin position="328"/>
        <end position="333"/>
    </location>
</feature>
<feature type="strand" evidence="7">
    <location>
        <begin position="334"/>
        <end position="337"/>
    </location>
</feature>
<feature type="helix" evidence="7">
    <location>
        <begin position="343"/>
        <end position="346"/>
    </location>
</feature>
<feature type="strand" evidence="7">
    <location>
        <begin position="352"/>
        <end position="356"/>
    </location>
</feature>
<feature type="helix" evidence="7">
    <location>
        <begin position="357"/>
        <end position="359"/>
    </location>
</feature>
<feature type="strand" evidence="7">
    <location>
        <begin position="361"/>
        <end position="363"/>
    </location>
</feature>
<feature type="turn" evidence="7">
    <location>
        <begin position="364"/>
        <end position="366"/>
    </location>
</feature>
<feature type="strand" evidence="7">
    <location>
        <begin position="367"/>
        <end position="374"/>
    </location>
</feature>
<feature type="helix" evidence="7">
    <location>
        <begin position="378"/>
        <end position="393"/>
    </location>
</feature>
<sequence length="396" mass="42490">MASVTFSVPKGFTEFSGLRSSSASLPFGKKLSSDEFVSIVSFQTSAMGSSGGYRKGVTEAKLKVAINGFGRIGRNFLRCWHGRKDSPLDIIAINDTGGVKQASHLLKYDSTLGIFDADVKPSGETAISVDGKIIQVVSNRNPSLLPWKELGIDIVIEGTGVFVDREGAGKHIEAGAKKVIITAPGKGDIPTYVVGVNADAYSHDEPIISNASCTTNCLAPFVKVLDQKFGIIKGTMTTTHSYTGDQRLLDASHRDLRRARAAALNIVPTSTGAAKAVALVLPNLKGKLNGIALRVPTPNVSVVDLVVQVSKKTFAEEVNAAFRDSAEKELKGILDVCDEPLVSVDFRCSDFSTTIDSSLTMVMGDDMVKVIAWYDNEWGYSQRVVDLADIVANNWK</sequence>
<evidence type="ECO:0000250" key="1"/>
<evidence type="ECO:0000255" key="2">
    <source>
        <dbReference type="PROSITE-ProRule" id="PRU10009"/>
    </source>
</evidence>
<evidence type="ECO:0000269" key="3">
    <source>
    </source>
</evidence>
<evidence type="ECO:0000269" key="4">
    <source>
    </source>
</evidence>
<evidence type="ECO:0000269" key="5">
    <source>
    </source>
</evidence>
<evidence type="ECO:0000305" key="6"/>
<evidence type="ECO:0007829" key="7">
    <source>
        <dbReference type="PDB" id="3QV1"/>
    </source>
</evidence>
<comment type="function">
    <text evidence="1">Involved in the photosynthetic reductive pentose phosphate pathway (Calvin-Benson cycle). Catalyzes the reduction of 1,3-diphosphoglycerate by NADPH (By similarity).</text>
</comment>
<comment type="catalytic activity">
    <reaction>
        <text>D-glyceraldehyde 3-phosphate + phosphate + NADP(+) = (2R)-3-phospho-glyceroyl phosphate + NADPH + H(+)</text>
        <dbReference type="Rhea" id="RHEA:10296"/>
        <dbReference type="ChEBI" id="CHEBI:15378"/>
        <dbReference type="ChEBI" id="CHEBI:43474"/>
        <dbReference type="ChEBI" id="CHEBI:57604"/>
        <dbReference type="ChEBI" id="CHEBI:57783"/>
        <dbReference type="ChEBI" id="CHEBI:58349"/>
        <dbReference type="ChEBI" id="CHEBI:59776"/>
        <dbReference type="EC" id="1.2.1.13"/>
    </reaction>
</comment>
<comment type="pathway">
    <text>Carbohydrate biosynthesis; Calvin cycle.</text>
</comment>
<comment type="subunit">
    <text evidence="4 5">Tetramer of either four A chains (GAPDH 2) or two A and two B chains (GAPDH 1).</text>
</comment>
<comment type="interaction">
    <interactant intactId="EBI-1554434">
        <id>P25856</id>
    </interactant>
    <interactant intactId="EBI-449218">
        <id>Q9LZP9</id>
        <label>CP12-2</label>
    </interactant>
    <organismsDiffer>false</organismsDiffer>
    <experiments>4</experiments>
</comment>
<comment type="subcellular location">
    <subcellularLocation>
        <location>Plastid</location>
        <location>Chloroplast membrane</location>
        <topology>Peripheral membrane protein</topology>
    </subcellularLocation>
    <subcellularLocation>
        <location>Plastid</location>
        <location>Chloroplast stroma</location>
    </subcellularLocation>
</comment>
<comment type="tissue specificity">
    <text evidence="3">Expressed in leaves and stems.</text>
</comment>
<comment type="induction">
    <text evidence="3">Repressed by darkness and sucrose.</text>
</comment>
<comment type="miscellaneous">
    <text>Plants contain three types of GAPDH: NAD-dependent cytosolic forms which participate in glycolysis, NAD-dependent chloroplastic forms which participate in plastidic glycolysis and NADP-dependent chloroplastic forms which participate in the photosynthetic reductive pentose phosphate pathway (Calvin-Benson cycle). All the forms are encoded by distinct genes.</text>
</comment>
<comment type="similarity">
    <text evidence="6">Belongs to the glyceraldehyde-3-phosphate dehydrogenase family.</text>
</comment>
<comment type="sequence caution" evidence="6">
    <conflict type="erroneous initiation">
        <sequence resource="EMBL-CDS" id="AAD10209"/>
    </conflict>
    <text>Truncated N-terminus.</text>
</comment>
<keyword id="KW-0002">3D-structure</keyword>
<keyword id="KW-0113">Calvin cycle</keyword>
<keyword id="KW-0150">Chloroplast</keyword>
<keyword id="KW-0472">Membrane</keyword>
<keyword id="KW-0521">NADP</keyword>
<keyword id="KW-0560">Oxidoreductase</keyword>
<keyword id="KW-0934">Plastid</keyword>
<keyword id="KW-1185">Reference proteome</keyword>
<keyword id="KW-0809">Transit peptide</keyword>
<organism>
    <name type="scientific">Arabidopsis thaliana</name>
    <name type="common">Mouse-ear cress</name>
    <dbReference type="NCBI Taxonomy" id="3702"/>
    <lineage>
        <taxon>Eukaryota</taxon>
        <taxon>Viridiplantae</taxon>
        <taxon>Streptophyta</taxon>
        <taxon>Embryophyta</taxon>
        <taxon>Tracheophyta</taxon>
        <taxon>Spermatophyta</taxon>
        <taxon>Magnoliopsida</taxon>
        <taxon>eudicotyledons</taxon>
        <taxon>Gunneridae</taxon>
        <taxon>Pentapetalae</taxon>
        <taxon>rosids</taxon>
        <taxon>malvids</taxon>
        <taxon>Brassicales</taxon>
        <taxon>Brassicaceae</taxon>
        <taxon>Camelineae</taxon>
        <taxon>Arabidopsis</taxon>
    </lineage>
</organism>
<name>G3PA1_ARATH</name>